<feature type="chain" id="PRO_0000195798" description="Xylose isomerase">
    <location>
        <begin position="1"/>
        <end position="387"/>
    </location>
</feature>
<feature type="active site" evidence="1">
    <location>
        <position position="54"/>
    </location>
</feature>
<feature type="active site" evidence="1">
    <location>
        <position position="57"/>
    </location>
</feature>
<feature type="binding site" evidence="1">
    <location>
        <position position="181"/>
    </location>
    <ligand>
        <name>Mg(2+)</name>
        <dbReference type="ChEBI" id="CHEBI:18420"/>
        <label>1</label>
    </ligand>
</feature>
<feature type="binding site" evidence="1">
    <location>
        <position position="217"/>
    </location>
    <ligand>
        <name>Mg(2+)</name>
        <dbReference type="ChEBI" id="CHEBI:18420"/>
        <label>1</label>
    </ligand>
</feature>
<feature type="binding site" evidence="1">
    <location>
        <position position="217"/>
    </location>
    <ligand>
        <name>Mg(2+)</name>
        <dbReference type="ChEBI" id="CHEBI:18420"/>
        <label>2</label>
    </ligand>
</feature>
<feature type="binding site" evidence="1">
    <location>
        <position position="220"/>
    </location>
    <ligand>
        <name>Mg(2+)</name>
        <dbReference type="ChEBI" id="CHEBI:18420"/>
        <label>2</label>
    </ligand>
</feature>
<feature type="binding site" evidence="1">
    <location>
        <position position="245"/>
    </location>
    <ligand>
        <name>Mg(2+)</name>
        <dbReference type="ChEBI" id="CHEBI:18420"/>
        <label>1</label>
    </ligand>
</feature>
<feature type="binding site" evidence="1">
    <location>
        <position position="255"/>
    </location>
    <ligand>
        <name>Mg(2+)</name>
        <dbReference type="ChEBI" id="CHEBI:18420"/>
        <label>2</label>
    </ligand>
</feature>
<feature type="binding site" evidence="1">
    <location>
        <position position="257"/>
    </location>
    <ligand>
        <name>Mg(2+)</name>
        <dbReference type="ChEBI" id="CHEBI:18420"/>
        <label>2</label>
    </ligand>
</feature>
<feature type="binding site" evidence="1">
    <location>
        <position position="287"/>
    </location>
    <ligand>
        <name>Mg(2+)</name>
        <dbReference type="ChEBI" id="CHEBI:18420"/>
        <label>1</label>
    </ligand>
</feature>
<sequence length="387" mass="42918">MNYQPTPEDRFTFGLWTVGWQGRDPFGDATRQALDPAESVRRLSELGAYGVTFHDDDLIPFGSSDTERESHIKRFRQALDATGMKVPMATTNLFTHPVFKDGAFTANDRDVRRYALRKTIRNIDLAVELGASVYVAWGGREGAESGAAKDVRDALDRMKEAFDLLGEYVTEQGYDLKFAIEPKPNEPRGDILLPTVGHALAFIERLERPELYGVNPEVGHEQMAGLNFPHGIAQALWAGKLFHIDLNGQSGIKYDQDLRFGAGDLRAAFWLVDLLERAGYAGPRHFDFKPPRTEDFDGVWASAAGCMRNYLILKDRAAAFRADPQVQEALAAARLDELARPTAEDGLAALLADRSAYDTFDVDAAAARGMAFEHLDQLAMDHLLGAR</sequence>
<protein>
    <recommendedName>
        <fullName evidence="1">Xylose isomerase</fullName>
        <ecNumber evidence="1">5.3.1.5</ecNumber>
    </recommendedName>
</protein>
<accession>Q9L0B8</accession>
<comment type="catalytic activity">
    <reaction evidence="1">
        <text>alpha-D-xylose = alpha-D-xylulofuranose</text>
        <dbReference type="Rhea" id="RHEA:22816"/>
        <dbReference type="ChEBI" id="CHEBI:28518"/>
        <dbReference type="ChEBI" id="CHEBI:188998"/>
        <dbReference type="EC" id="5.3.1.5"/>
    </reaction>
</comment>
<comment type="cofactor">
    <cofactor evidence="1">
        <name>Mg(2+)</name>
        <dbReference type="ChEBI" id="CHEBI:18420"/>
    </cofactor>
    <text evidence="1">Binds 2 magnesium ions per subunit.</text>
</comment>
<comment type="subunit">
    <text evidence="1">Homotetramer.</text>
</comment>
<comment type="subcellular location">
    <subcellularLocation>
        <location evidence="1">Cytoplasm</location>
    </subcellularLocation>
</comment>
<comment type="similarity">
    <text evidence="1">Belongs to the xylose isomerase family.</text>
</comment>
<evidence type="ECO:0000255" key="1">
    <source>
        <dbReference type="HAMAP-Rule" id="MF_00455"/>
    </source>
</evidence>
<name>XYLA_STRCO</name>
<reference key="1">
    <citation type="journal article" date="2002" name="Nature">
        <title>Complete genome sequence of the model actinomycete Streptomyces coelicolor A3(2).</title>
        <authorList>
            <person name="Bentley S.D."/>
            <person name="Chater K.F."/>
            <person name="Cerdeno-Tarraga A.-M."/>
            <person name="Challis G.L."/>
            <person name="Thomson N.R."/>
            <person name="James K.D."/>
            <person name="Harris D.E."/>
            <person name="Quail M.A."/>
            <person name="Kieser H."/>
            <person name="Harper D."/>
            <person name="Bateman A."/>
            <person name="Brown S."/>
            <person name="Chandra G."/>
            <person name="Chen C.W."/>
            <person name="Collins M."/>
            <person name="Cronin A."/>
            <person name="Fraser A."/>
            <person name="Goble A."/>
            <person name="Hidalgo J."/>
            <person name="Hornsby T."/>
            <person name="Howarth S."/>
            <person name="Huang C.-H."/>
            <person name="Kieser T."/>
            <person name="Larke L."/>
            <person name="Murphy L.D."/>
            <person name="Oliver K."/>
            <person name="O'Neil S."/>
            <person name="Rabbinowitsch E."/>
            <person name="Rajandream M.A."/>
            <person name="Rutherford K.M."/>
            <person name="Rutter S."/>
            <person name="Seeger K."/>
            <person name="Saunders D."/>
            <person name="Sharp S."/>
            <person name="Squares R."/>
            <person name="Squares S."/>
            <person name="Taylor K."/>
            <person name="Warren T."/>
            <person name="Wietzorrek A."/>
            <person name="Woodward J.R."/>
            <person name="Barrell B.G."/>
            <person name="Parkhill J."/>
            <person name="Hopwood D.A."/>
        </authorList>
    </citation>
    <scope>NUCLEOTIDE SEQUENCE [LARGE SCALE GENOMIC DNA]</scope>
    <source>
        <strain>ATCC BAA-471 / A3(2) / M145</strain>
    </source>
</reference>
<dbReference type="EC" id="5.3.1.5" evidence="1"/>
<dbReference type="EMBL" id="AL939108">
    <property type="protein sequence ID" value="CAB82827.1"/>
    <property type="molecule type" value="Genomic_DNA"/>
</dbReference>
<dbReference type="RefSeq" id="NP_625460.1">
    <property type="nucleotide sequence ID" value="NC_003888.3"/>
</dbReference>
<dbReference type="RefSeq" id="WP_003977662.1">
    <property type="nucleotide sequence ID" value="NZ_VNID01000006.1"/>
</dbReference>
<dbReference type="SMR" id="Q9L0B8"/>
<dbReference type="STRING" id="100226.gene:17758752"/>
<dbReference type="PaxDb" id="100226-SCO1169"/>
<dbReference type="KEGG" id="sco:SCO1169"/>
<dbReference type="PATRIC" id="fig|100226.15.peg.1167"/>
<dbReference type="eggNOG" id="COG2115">
    <property type="taxonomic scope" value="Bacteria"/>
</dbReference>
<dbReference type="HOGENOM" id="CLU_060750_0_0_11"/>
<dbReference type="InParanoid" id="Q9L0B8"/>
<dbReference type="OrthoDB" id="9763981at2"/>
<dbReference type="PhylomeDB" id="Q9L0B8"/>
<dbReference type="Proteomes" id="UP000001973">
    <property type="component" value="Chromosome"/>
</dbReference>
<dbReference type="GO" id="GO:0005737">
    <property type="term" value="C:cytoplasm"/>
    <property type="evidence" value="ECO:0007669"/>
    <property type="project" value="UniProtKB-SubCell"/>
</dbReference>
<dbReference type="GO" id="GO:0000287">
    <property type="term" value="F:magnesium ion binding"/>
    <property type="evidence" value="ECO:0007669"/>
    <property type="project" value="UniProtKB-UniRule"/>
</dbReference>
<dbReference type="GO" id="GO:0009045">
    <property type="term" value="F:xylose isomerase activity"/>
    <property type="evidence" value="ECO:0007669"/>
    <property type="project" value="UniProtKB-UniRule"/>
</dbReference>
<dbReference type="GO" id="GO:0042732">
    <property type="term" value="P:D-xylose metabolic process"/>
    <property type="evidence" value="ECO:0007669"/>
    <property type="project" value="UniProtKB-UniRule"/>
</dbReference>
<dbReference type="FunFam" id="3.20.20.150:FF:000009">
    <property type="entry name" value="Xylose isomerase"/>
    <property type="match status" value="1"/>
</dbReference>
<dbReference type="Gene3D" id="3.20.20.150">
    <property type="entry name" value="Divalent-metal-dependent TIM barrel enzymes"/>
    <property type="match status" value="1"/>
</dbReference>
<dbReference type="HAMAP" id="MF_00455">
    <property type="entry name" value="Xylose_isom_A"/>
    <property type="match status" value="1"/>
</dbReference>
<dbReference type="InterPro" id="IPR036237">
    <property type="entry name" value="Xyl_isomerase-like_sf"/>
</dbReference>
<dbReference type="InterPro" id="IPR013022">
    <property type="entry name" value="Xyl_isomerase-like_TIM-brl"/>
</dbReference>
<dbReference type="InterPro" id="IPR013453">
    <property type="entry name" value="XylA_actinobac"/>
</dbReference>
<dbReference type="InterPro" id="IPR001998">
    <property type="entry name" value="Xylose_isomerase"/>
</dbReference>
<dbReference type="NCBIfam" id="TIGR02631">
    <property type="entry name" value="xylA_Arthro"/>
    <property type="match status" value="1"/>
</dbReference>
<dbReference type="PANTHER" id="PTHR48408">
    <property type="match status" value="1"/>
</dbReference>
<dbReference type="PANTHER" id="PTHR48408:SF1">
    <property type="entry name" value="XYLOSE ISOMERASE"/>
    <property type="match status" value="1"/>
</dbReference>
<dbReference type="Pfam" id="PF01261">
    <property type="entry name" value="AP_endonuc_2"/>
    <property type="match status" value="1"/>
</dbReference>
<dbReference type="PRINTS" id="PR00688">
    <property type="entry name" value="XYLOSISMRASE"/>
</dbReference>
<dbReference type="SUPFAM" id="SSF51658">
    <property type="entry name" value="Xylose isomerase-like"/>
    <property type="match status" value="1"/>
</dbReference>
<dbReference type="PROSITE" id="PS51415">
    <property type="entry name" value="XYLOSE_ISOMERASE"/>
    <property type="match status" value="1"/>
</dbReference>
<gene>
    <name evidence="1" type="primary">xylA</name>
    <name type="ordered locus">SCO1169</name>
    <name type="ORF">2SCG11.03c</name>
</gene>
<keyword id="KW-0119">Carbohydrate metabolism</keyword>
<keyword id="KW-0963">Cytoplasm</keyword>
<keyword id="KW-0413">Isomerase</keyword>
<keyword id="KW-0460">Magnesium</keyword>
<keyword id="KW-0479">Metal-binding</keyword>
<keyword id="KW-1185">Reference proteome</keyword>
<keyword id="KW-0859">Xylose metabolism</keyword>
<proteinExistence type="inferred from homology"/>
<organism>
    <name type="scientific">Streptomyces coelicolor (strain ATCC BAA-471 / A3(2) / M145)</name>
    <dbReference type="NCBI Taxonomy" id="100226"/>
    <lineage>
        <taxon>Bacteria</taxon>
        <taxon>Bacillati</taxon>
        <taxon>Actinomycetota</taxon>
        <taxon>Actinomycetes</taxon>
        <taxon>Kitasatosporales</taxon>
        <taxon>Streptomycetaceae</taxon>
        <taxon>Streptomyces</taxon>
        <taxon>Streptomyces albidoflavus group</taxon>
    </lineage>
</organism>